<keyword id="KW-0021">Allosteric enzyme</keyword>
<keyword id="KW-0328">Glycosyltransferase</keyword>
<keyword id="KW-0342">GTP-binding</keyword>
<keyword id="KW-0460">Magnesium</keyword>
<keyword id="KW-0547">Nucleotide-binding</keyword>
<keyword id="KW-0808">Transferase</keyword>
<name>UPP_STAAE</name>
<organism>
    <name type="scientific">Staphylococcus aureus (strain Newman)</name>
    <dbReference type="NCBI Taxonomy" id="426430"/>
    <lineage>
        <taxon>Bacteria</taxon>
        <taxon>Bacillati</taxon>
        <taxon>Bacillota</taxon>
        <taxon>Bacilli</taxon>
        <taxon>Bacillales</taxon>
        <taxon>Staphylococcaceae</taxon>
        <taxon>Staphylococcus</taxon>
    </lineage>
</organism>
<proteinExistence type="inferred from homology"/>
<evidence type="ECO:0000255" key="1">
    <source>
        <dbReference type="HAMAP-Rule" id="MF_01218"/>
    </source>
</evidence>
<feature type="chain" id="PRO_1000073131" description="Uracil phosphoribosyltransferase">
    <location>
        <begin position="1"/>
        <end position="209"/>
    </location>
</feature>
<feature type="binding site" evidence="1">
    <location>
        <position position="79"/>
    </location>
    <ligand>
        <name>5-phospho-alpha-D-ribose 1-diphosphate</name>
        <dbReference type="ChEBI" id="CHEBI:58017"/>
    </ligand>
</feature>
<feature type="binding site" evidence="1">
    <location>
        <position position="104"/>
    </location>
    <ligand>
        <name>5-phospho-alpha-D-ribose 1-diphosphate</name>
        <dbReference type="ChEBI" id="CHEBI:58017"/>
    </ligand>
</feature>
<feature type="binding site" evidence="1">
    <location>
        <begin position="131"/>
        <end position="139"/>
    </location>
    <ligand>
        <name>5-phospho-alpha-D-ribose 1-diphosphate</name>
        <dbReference type="ChEBI" id="CHEBI:58017"/>
    </ligand>
</feature>
<feature type="binding site" evidence="1">
    <location>
        <position position="194"/>
    </location>
    <ligand>
        <name>uracil</name>
        <dbReference type="ChEBI" id="CHEBI:17568"/>
    </ligand>
</feature>
<feature type="binding site" evidence="1">
    <location>
        <begin position="199"/>
        <end position="201"/>
    </location>
    <ligand>
        <name>uracil</name>
        <dbReference type="ChEBI" id="CHEBI:17568"/>
    </ligand>
</feature>
<feature type="binding site" evidence="1">
    <location>
        <position position="200"/>
    </location>
    <ligand>
        <name>5-phospho-alpha-D-ribose 1-diphosphate</name>
        <dbReference type="ChEBI" id="CHEBI:58017"/>
    </ligand>
</feature>
<gene>
    <name evidence="1" type="primary">upp</name>
    <name type="ordered locus">NWMN_2016</name>
</gene>
<sequence>MSKVHVFDHPLIQHKLSYIRDVNTGTKEFRELVDEVGMLMAYEVTRDLELQDVDIETPVTKMTAKRLAGKKLAIVPILRAGLGMTDGILSLVPAARVGHIGLYRDPETLKAVEYFAKLPQDITERQIIVVDPMLATGASAIEAITSLKKRGAKNIRFMCLIAAPEGVEKMHEAHPDVDIYIAALDEKLNDKAYITPGLGDAGDRLFGTK</sequence>
<reference key="1">
    <citation type="journal article" date="2008" name="J. Bacteriol.">
        <title>Genome sequence of Staphylococcus aureus strain Newman and comparative analysis of staphylococcal genomes: polymorphism and evolution of two major pathogenicity islands.</title>
        <authorList>
            <person name="Baba T."/>
            <person name="Bae T."/>
            <person name="Schneewind O."/>
            <person name="Takeuchi F."/>
            <person name="Hiramatsu K."/>
        </authorList>
    </citation>
    <scope>NUCLEOTIDE SEQUENCE [LARGE SCALE GENOMIC DNA]</scope>
    <source>
        <strain>Newman</strain>
    </source>
</reference>
<protein>
    <recommendedName>
        <fullName evidence="1">Uracil phosphoribosyltransferase</fullName>
        <ecNumber evidence="1">2.4.2.9</ecNumber>
    </recommendedName>
    <alternativeName>
        <fullName evidence="1">UMP pyrophosphorylase</fullName>
    </alternativeName>
    <alternativeName>
        <fullName evidence="1">UPRTase</fullName>
    </alternativeName>
</protein>
<dbReference type="EC" id="2.4.2.9" evidence="1"/>
<dbReference type="EMBL" id="AP009351">
    <property type="protein sequence ID" value="BAF68288.1"/>
    <property type="molecule type" value="Genomic_DNA"/>
</dbReference>
<dbReference type="RefSeq" id="WP_000048712.1">
    <property type="nucleotide sequence ID" value="NZ_JBBIAE010000008.1"/>
</dbReference>
<dbReference type="SMR" id="A6QIV6"/>
<dbReference type="KEGG" id="sae:NWMN_2016"/>
<dbReference type="HOGENOM" id="CLU_067096_2_2_9"/>
<dbReference type="UniPathway" id="UPA00574">
    <property type="reaction ID" value="UER00636"/>
</dbReference>
<dbReference type="Proteomes" id="UP000006386">
    <property type="component" value="Chromosome"/>
</dbReference>
<dbReference type="GO" id="GO:0005525">
    <property type="term" value="F:GTP binding"/>
    <property type="evidence" value="ECO:0007669"/>
    <property type="project" value="UniProtKB-KW"/>
</dbReference>
<dbReference type="GO" id="GO:0000287">
    <property type="term" value="F:magnesium ion binding"/>
    <property type="evidence" value="ECO:0007669"/>
    <property type="project" value="UniProtKB-UniRule"/>
</dbReference>
<dbReference type="GO" id="GO:0004845">
    <property type="term" value="F:uracil phosphoribosyltransferase activity"/>
    <property type="evidence" value="ECO:0007669"/>
    <property type="project" value="UniProtKB-UniRule"/>
</dbReference>
<dbReference type="GO" id="GO:0044206">
    <property type="term" value="P:UMP salvage"/>
    <property type="evidence" value="ECO:0007669"/>
    <property type="project" value="UniProtKB-UniRule"/>
</dbReference>
<dbReference type="GO" id="GO:0006223">
    <property type="term" value="P:uracil salvage"/>
    <property type="evidence" value="ECO:0007669"/>
    <property type="project" value="InterPro"/>
</dbReference>
<dbReference type="CDD" id="cd06223">
    <property type="entry name" value="PRTases_typeI"/>
    <property type="match status" value="1"/>
</dbReference>
<dbReference type="FunFam" id="3.40.50.2020:FF:000003">
    <property type="entry name" value="Uracil phosphoribosyltransferase"/>
    <property type="match status" value="1"/>
</dbReference>
<dbReference type="Gene3D" id="3.40.50.2020">
    <property type="match status" value="1"/>
</dbReference>
<dbReference type="HAMAP" id="MF_01218_B">
    <property type="entry name" value="Upp_B"/>
    <property type="match status" value="1"/>
</dbReference>
<dbReference type="InterPro" id="IPR000836">
    <property type="entry name" value="PRibTrfase_dom"/>
</dbReference>
<dbReference type="InterPro" id="IPR029057">
    <property type="entry name" value="PRTase-like"/>
</dbReference>
<dbReference type="InterPro" id="IPR034332">
    <property type="entry name" value="Upp_B"/>
</dbReference>
<dbReference type="InterPro" id="IPR050054">
    <property type="entry name" value="UPRTase/APRTase"/>
</dbReference>
<dbReference type="InterPro" id="IPR005765">
    <property type="entry name" value="Ura_phspho_trans"/>
</dbReference>
<dbReference type="NCBIfam" id="NF001097">
    <property type="entry name" value="PRK00129.1"/>
    <property type="match status" value="1"/>
</dbReference>
<dbReference type="NCBIfam" id="TIGR01091">
    <property type="entry name" value="upp"/>
    <property type="match status" value="1"/>
</dbReference>
<dbReference type="PANTHER" id="PTHR32315">
    <property type="entry name" value="ADENINE PHOSPHORIBOSYLTRANSFERASE"/>
    <property type="match status" value="1"/>
</dbReference>
<dbReference type="PANTHER" id="PTHR32315:SF4">
    <property type="entry name" value="URACIL PHOSPHORIBOSYLTRANSFERASE, CHLOROPLASTIC"/>
    <property type="match status" value="1"/>
</dbReference>
<dbReference type="Pfam" id="PF14681">
    <property type="entry name" value="UPRTase"/>
    <property type="match status" value="1"/>
</dbReference>
<dbReference type="SUPFAM" id="SSF53271">
    <property type="entry name" value="PRTase-like"/>
    <property type="match status" value="1"/>
</dbReference>
<comment type="function">
    <text evidence="1">Catalyzes the conversion of uracil and 5-phospho-alpha-D-ribose 1-diphosphate (PRPP) to UMP and diphosphate.</text>
</comment>
<comment type="catalytic activity">
    <reaction evidence="1">
        <text>UMP + diphosphate = 5-phospho-alpha-D-ribose 1-diphosphate + uracil</text>
        <dbReference type="Rhea" id="RHEA:13017"/>
        <dbReference type="ChEBI" id="CHEBI:17568"/>
        <dbReference type="ChEBI" id="CHEBI:33019"/>
        <dbReference type="ChEBI" id="CHEBI:57865"/>
        <dbReference type="ChEBI" id="CHEBI:58017"/>
        <dbReference type="EC" id="2.4.2.9"/>
    </reaction>
</comment>
<comment type="cofactor">
    <cofactor evidence="1">
        <name>Mg(2+)</name>
        <dbReference type="ChEBI" id="CHEBI:18420"/>
    </cofactor>
    <text evidence="1">Binds 1 Mg(2+) ion per subunit. The magnesium is bound as Mg-PRPP.</text>
</comment>
<comment type="activity regulation">
    <text evidence="1">Allosterically activated by GTP.</text>
</comment>
<comment type="pathway">
    <text evidence="1">Pyrimidine metabolism; UMP biosynthesis via salvage pathway; UMP from uracil: step 1/1.</text>
</comment>
<comment type="similarity">
    <text evidence="1">Belongs to the UPRTase family.</text>
</comment>
<accession>A6QIV6</accession>